<protein>
    <recommendedName>
        <fullName evidence="4">Large ribosomal subunit protein eL14</fullName>
    </recommendedName>
    <alternativeName>
        <fullName>60S ribosomal protein L14</fullName>
    </alternativeName>
</protein>
<accession>Q9CR57</accession>
<accession>Q9D8Q1</accession>
<feature type="chain" id="PRO_0000132032" description="Large ribosomal subunit protein eL14">
    <location>
        <begin position="1"/>
        <end position="217"/>
    </location>
</feature>
<feature type="repeat" description="1-1; approximate">
    <location>
        <begin position="173"/>
        <end position="177"/>
    </location>
</feature>
<feature type="repeat" description="1-2">
    <location>
        <begin position="178"/>
        <end position="182"/>
    </location>
</feature>
<feature type="repeat" description="1-3">
    <location>
        <begin position="183"/>
        <end position="187"/>
    </location>
</feature>
<feature type="repeat" description="1-4">
    <location>
        <begin position="188"/>
        <end position="192"/>
    </location>
</feature>
<feature type="repeat" description="2-1">
    <location>
        <begin position="195"/>
        <end position="197"/>
    </location>
</feature>
<feature type="repeat" description="2-2">
    <location>
        <begin position="198"/>
        <end position="200"/>
    </location>
</feature>
<feature type="region of interest" description="Disordered" evidence="2">
    <location>
        <begin position="162"/>
        <end position="217"/>
    </location>
</feature>
<feature type="region of interest" description="4 X 5 AA tandem repeats of Q-K-A-[APS]-X">
    <location>
        <begin position="173"/>
        <end position="192"/>
    </location>
</feature>
<feature type="region of interest" description="2 X 3 AA tandem repeats of K-G-Q">
    <location>
        <begin position="195"/>
        <end position="200"/>
    </location>
</feature>
<feature type="modified residue" description="N6-acetyllysine" evidence="1">
    <location>
        <position position="79"/>
    </location>
</feature>
<feature type="modified residue" description="N6-acetyllysine; alternate" evidence="8">
    <location>
        <position position="85"/>
    </location>
</feature>
<feature type="modified residue" description="N6-succinyllysine; alternate" evidence="8">
    <location>
        <position position="85"/>
    </location>
</feature>
<feature type="modified residue" description="Phosphoserine" evidence="7">
    <location>
        <position position="139"/>
    </location>
</feature>
<feature type="modified residue" description="N6-succinyllysine" evidence="8">
    <location>
        <position position="206"/>
    </location>
</feature>
<feature type="cross-link" description="Glycyl lysine isopeptide (Lys-Gly) (interchain with G-Cter in SUMO2)" evidence="1">
    <location>
        <position position="124"/>
    </location>
</feature>
<feature type="sequence conflict" description="In Ref. 1; BAB25272." evidence="4" ref="1">
    <original>A</original>
    <variation>T</variation>
    <location>
        <position position="26"/>
    </location>
</feature>
<sequence length="217" mass="23564">MVFRRYVEVGRVAYISFGPHAGKLVAIVDVIDQNRALVDGPCTRVRRQAMPFKCMQLTDFILKFPHSARQKYVRKAWEKADINTKWAATRWAKKIDARERKAKMTDFDRFKVMKAKKMRNRIIKTEVKKLQRAAILKASPKKAAVAKAAIAAAAAAAAAKAKVPAKKATGPGKKAAGQKAPAQKAAGQKAAPPAKGQKGQKTPAQKAPAPKAAGKKA</sequence>
<comment type="function">
    <text evidence="3">Component of the large ribosomal subunit (PubMed:36517592). The ribosome is a large ribonucleoprotein complex responsible for the synthesis of proteins in the cell (PubMed:36517592).</text>
</comment>
<comment type="subunit">
    <text evidence="3">Component of the large ribosomal subunit.</text>
</comment>
<comment type="subcellular location">
    <subcellularLocation>
        <location evidence="3">Cytoplasm</location>
    </subcellularLocation>
</comment>
<comment type="similarity">
    <text evidence="4">Belongs to the eukaryotic ribosomal protein eL14 family.</text>
</comment>
<evidence type="ECO:0000250" key="1">
    <source>
        <dbReference type="UniProtKB" id="P50914"/>
    </source>
</evidence>
<evidence type="ECO:0000256" key="2">
    <source>
        <dbReference type="SAM" id="MobiDB-lite"/>
    </source>
</evidence>
<evidence type="ECO:0000269" key="3">
    <source>
    </source>
</evidence>
<evidence type="ECO:0000305" key="4"/>
<evidence type="ECO:0007744" key="5">
    <source>
        <dbReference type="PDB" id="7CPU"/>
    </source>
</evidence>
<evidence type="ECO:0007744" key="6">
    <source>
        <dbReference type="PDB" id="7CPV"/>
    </source>
</evidence>
<evidence type="ECO:0007744" key="7">
    <source>
    </source>
</evidence>
<evidence type="ECO:0007744" key="8">
    <source>
    </source>
</evidence>
<gene>
    <name type="primary">Rpl14</name>
</gene>
<proteinExistence type="evidence at protein level"/>
<name>RL14_MOUSE</name>
<keyword id="KW-0002">3D-structure</keyword>
<keyword id="KW-0007">Acetylation</keyword>
<keyword id="KW-0963">Cytoplasm</keyword>
<keyword id="KW-1017">Isopeptide bond</keyword>
<keyword id="KW-0597">Phosphoprotein</keyword>
<keyword id="KW-1185">Reference proteome</keyword>
<keyword id="KW-0677">Repeat</keyword>
<keyword id="KW-0687">Ribonucleoprotein</keyword>
<keyword id="KW-0689">Ribosomal protein</keyword>
<keyword id="KW-0832">Ubl conjugation</keyword>
<reference key="1">
    <citation type="journal article" date="2005" name="Science">
        <title>The transcriptional landscape of the mammalian genome.</title>
        <authorList>
            <person name="Carninci P."/>
            <person name="Kasukawa T."/>
            <person name="Katayama S."/>
            <person name="Gough J."/>
            <person name="Frith M.C."/>
            <person name="Maeda N."/>
            <person name="Oyama R."/>
            <person name="Ravasi T."/>
            <person name="Lenhard B."/>
            <person name="Wells C."/>
            <person name="Kodzius R."/>
            <person name="Shimokawa K."/>
            <person name="Bajic V.B."/>
            <person name="Brenner S.E."/>
            <person name="Batalov S."/>
            <person name="Forrest A.R."/>
            <person name="Zavolan M."/>
            <person name="Davis M.J."/>
            <person name="Wilming L.G."/>
            <person name="Aidinis V."/>
            <person name="Allen J.E."/>
            <person name="Ambesi-Impiombato A."/>
            <person name="Apweiler R."/>
            <person name="Aturaliya R.N."/>
            <person name="Bailey T.L."/>
            <person name="Bansal M."/>
            <person name="Baxter L."/>
            <person name="Beisel K.W."/>
            <person name="Bersano T."/>
            <person name="Bono H."/>
            <person name="Chalk A.M."/>
            <person name="Chiu K.P."/>
            <person name="Choudhary V."/>
            <person name="Christoffels A."/>
            <person name="Clutterbuck D.R."/>
            <person name="Crowe M.L."/>
            <person name="Dalla E."/>
            <person name="Dalrymple B.P."/>
            <person name="de Bono B."/>
            <person name="Della Gatta G."/>
            <person name="di Bernardo D."/>
            <person name="Down T."/>
            <person name="Engstrom P."/>
            <person name="Fagiolini M."/>
            <person name="Faulkner G."/>
            <person name="Fletcher C.F."/>
            <person name="Fukushima T."/>
            <person name="Furuno M."/>
            <person name="Futaki S."/>
            <person name="Gariboldi M."/>
            <person name="Georgii-Hemming P."/>
            <person name="Gingeras T.R."/>
            <person name="Gojobori T."/>
            <person name="Green R.E."/>
            <person name="Gustincich S."/>
            <person name="Harbers M."/>
            <person name="Hayashi Y."/>
            <person name="Hensch T.K."/>
            <person name="Hirokawa N."/>
            <person name="Hill D."/>
            <person name="Huminiecki L."/>
            <person name="Iacono M."/>
            <person name="Ikeo K."/>
            <person name="Iwama A."/>
            <person name="Ishikawa T."/>
            <person name="Jakt M."/>
            <person name="Kanapin A."/>
            <person name="Katoh M."/>
            <person name="Kawasawa Y."/>
            <person name="Kelso J."/>
            <person name="Kitamura H."/>
            <person name="Kitano H."/>
            <person name="Kollias G."/>
            <person name="Krishnan S.P."/>
            <person name="Kruger A."/>
            <person name="Kummerfeld S.K."/>
            <person name="Kurochkin I.V."/>
            <person name="Lareau L.F."/>
            <person name="Lazarevic D."/>
            <person name="Lipovich L."/>
            <person name="Liu J."/>
            <person name="Liuni S."/>
            <person name="McWilliam S."/>
            <person name="Madan Babu M."/>
            <person name="Madera M."/>
            <person name="Marchionni L."/>
            <person name="Matsuda H."/>
            <person name="Matsuzawa S."/>
            <person name="Miki H."/>
            <person name="Mignone F."/>
            <person name="Miyake S."/>
            <person name="Morris K."/>
            <person name="Mottagui-Tabar S."/>
            <person name="Mulder N."/>
            <person name="Nakano N."/>
            <person name="Nakauchi H."/>
            <person name="Ng P."/>
            <person name="Nilsson R."/>
            <person name="Nishiguchi S."/>
            <person name="Nishikawa S."/>
            <person name="Nori F."/>
            <person name="Ohara O."/>
            <person name="Okazaki Y."/>
            <person name="Orlando V."/>
            <person name="Pang K.C."/>
            <person name="Pavan W.J."/>
            <person name="Pavesi G."/>
            <person name="Pesole G."/>
            <person name="Petrovsky N."/>
            <person name="Piazza S."/>
            <person name="Reed J."/>
            <person name="Reid J.F."/>
            <person name="Ring B.Z."/>
            <person name="Ringwald M."/>
            <person name="Rost B."/>
            <person name="Ruan Y."/>
            <person name="Salzberg S.L."/>
            <person name="Sandelin A."/>
            <person name="Schneider C."/>
            <person name="Schoenbach C."/>
            <person name="Sekiguchi K."/>
            <person name="Semple C.A."/>
            <person name="Seno S."/>
            <person name="Sessa L."/>
            <person name="Sheng Y."/>
            <person name="Shibata Y."/>
            <person name="Shimada H."/>
            <person name="Shimada K."/>
            <person name="Silva D."/>
            <person name="Sinclair B."/>
            <person name="Sperling S."/>
            <person name="Stupka E."/>
            <person name="Sugiura K."/>
            <person name="Sultana R."/>
            <person name="Takenaka Y."/>
            <person name="Taki K."/>
            <person name="Tammoja K."/>
            <person name="Tan S.L."/>
            <person name="Tang S."/>
            <person name="Taylor M.S."/>
            <person name="Tegner J."/>
            <person name="Teichmann S.A."/>
            <person name="Ueda H.R."/>
            <person name="van Nimwegen E."/>
            <person name="Verardo R."/>
            <person name="Wei C.L."/>
            <person name="Yagi K."/>
            <person name="Yamanishi H."/>
            <person name="Zabarovsky E."/>
            <person name="Zhu S."/>
            <person name="Zimmer A."/>
            <person name="Hide W."/>
            <person name="Bult C."/>
            <person name="Grimmond S.M."/>
            <person name="Teasdale R.D."/>
            <person name="Liu E.T."/>
            <person name="Brusic V."/>
            <person name="Quackenbush J."/>
            <person name="Wahlestedt C."/>
            <person name="Mattick J.S."/>
            <person name="Hume D.A."/>
            <person name="Kai C."/>
            <person name="Sasaki D."/>
            <person name="Tomaru Y."/>
            <person name="Fukuda S."/>
            <person name="Kanamori-Katayama M."/>
            <person name="Suzuki M."/>
            <person name="Aoki J."/>
            <person name="Arakawa T."/>
            <person name="Iida J."/>
            <person name="Imamura K."/>
            <person name="Itoh M."/>
            <person name="Kato T."/>
            <person name="Kawaji H."/>
            <person name="Kawagashira N."/>
            <person name="Kawashima T."/>
            <person name="Kojima M."/>
            <person name="Kondo S."/>
            <person name="Konno H."/>
            <person name="Nakano K."/>
            <person name="Ninomiya N."/>
            <person name="Nishio T."/>
            <person name="Okada M."/>
            <person name="Plessy C."/>
            <person name="Shibata K."/>
            <person name="Shiraki T."/>
            <person name="Suzuki S."/>
            <person name="Tagami M."/>
            <person name="Waki K."/>
            <person name="Watahiki A."/>
            <person name="Okamura-Oho Y."/>
            <person name="Suzuki H."/>
            <person name="Kawai J."/>
            <person name="Hayashizaki Y."/>
        </authorList>
    </citation>
    <scope>NUCLEOTIDE SEQUENCE [LARGE SCALE MRNA]</scope>
    <source>
        <strain>C57BL/6J</strain>
        <tissue>Head</tissue>
        <tissue>Pancreas</tissue>
    </source>
</reference>
<reference key="2">
    <citation type="journal article" date="2010" name="Cell">
        <title>A tissue-specific atlas of mouse protein phosphorylation and expression.</title>
        <authorList>
            <person name="Huttlin E.L."/>
            <person name="Jedrychowski M.P."/>
            <person name="Elias J.E."/>
            <person name="Goswami T."/>
            <person name="Rad R."/>
            <person name="Beausoleil S.A."/>
            <person name="Villen J."/>
            <person name="Haas W."/>
            <person name="Sowa M.E."/>
            <person name="Gygi S.P."/>
        </authorList>
    </citation>
    <scope>PHOSPHORYLATION [LARGE SCALE ANALYSIS] AT SER-139</scope>
    <scope>IDENTIFICATION BY MASS SPECTROMETRY [LARGE SCALE ANALYSIS]</scope>
    <source>
        <tissue>Brain</tissue>
        <tissue>Brown adipose tissue</tissue>
        <tissue>Heart</tissue>
        <tissue>Kidney</tissue>
        <tissue>Liver</tissue>
        <tissue>Lung</tissue>
        <tissue>Pancreas</tissue>
        <tissue>Spleen</tissue>
        <tissue>Testis</tissue>
    </source>
</reference>
<reference key="3">
    <citation type="journal article" date="2013" name="Mol. Cell">
        <title>SIRT5-mediated lysine desuccinylation impacts diverse metabolic pathways.</title>
        <authorList>
            <person name="Park J."/>
            <person name="Chen Y."/>
            <person name="Tishkoff D.X."/>
            <person name="Peng C."/>
            <person name="Tan M."/>
            <person name="Dai L."/>
            <person name="Xie Z."/>
            <person name="Zhang Y."/>
            <person name="Zwaans B.M."/>
            <person name="Skinner M.E."/>
            <person name="Lombard D.B."/>
            <person name="Zhao Y."/>
        </authorList>
    </citation>
    <scope>ACETYLATION [LARGE SCALE ANALYSIS] AT LYS-85</scope>
    <scope>SUCCINYLATION [LARGE SCALE ANALYSIS] AT LYS-85 AND LYS-206</scope>
    <scope>IDENTIFICATION BY MASS SPECTROMETRY [LARGE SCALE ANALYSIS]</scope>
    <source>
        <tissue>Embryonic fibroblast</tissue>
    </source>
</reference>
<reference evidence="5 6" key="4">
    <citation type="journal article" date="2022" name="Nature">
        <title>A male germ-cell-specific ribosome controls male fertility.</title>
        <authorList>
            <person name="Li H."/>
            <person name="Huo Y."/>
            <person name="He X."/>
            <person name="Yao L."/>
            <person name="Zhang H."/>
            <person name="Cui Y."/>
            <person name="Xiao H."/>
            <person name="Xie W."/>
            <person name="Zhang D."/>
            <person name="Wang Y."/>
            <person name="Zhang S."/>
            <person name="Tu H."/>
            <person name="Cheng Y."/>
            <person name="Guo Y."/>
            <person name="Cao X."/>
            <person name="Zhu Y."/>
            <person name="Jiang T."/>
            <person name="Guo X."/>
            <person name="Qin Y."/>
            <person name="Sha J."/>
        </authorList>
    </citation>
    <scope>STRUCTURE BY ELECTRON MICROSCOPY (3.03 ANGSTROMS) OF RIBOSOME</scope>
    <scope>FUNCTION</scope>
    <scope>SUBUNIT</scope>
    <scope>SUBCELLULAR LOCATION</scope>
</reference>
<dbReference type="EMBL" id="AK007807">
    <property type="protein sequence ID" value="BAB25272.1"/>
    <property type="molecule type" value="mRNA"/>
</dbReference>
<dbReference type="EMBL" id="AK012277">
    <property type="protein sequence ID" value="BAB28136.1"/>
    <property type="molecule type" value="mRNA"/>
</dbReference>
<dbReference type="EMBL" id="AK013912">
    <property type="protein sequence ID" value="BAB29051.1"/>
    <property type="molecule type" value="mRNA"/>
</dbReference>
<dbReference type="CCDS" id="CCDS40809.1"/>
<dbReference type="RefSeq" id="NP_080250.1">
    <property type="nucleotide sequence ID" value="NM_025974.3"/>
</dbReference>
<dbReference type="PDB" id="6SWA">
    <property type="method" value="EM"/>
    <property type="resolution" value="3.10 A"/>
    <property type="chains" value="L=1-217"/>
</dbReference>
<dbReference type="PDB" id="7CPU">
    <property type="method" value="EM"/>
    <property type="resolution" value="2.82 A"/>
    <property type="chains" value="LM=1-217"/>
</dbReference>
<dbReference type="PDB" id="7CPV">
    <property type="method" value="EM"/>
    <property type="resolution" value="3.03 A"/>
    <property type="chains" value="LM=1-217"/>
</dbReference>
<dbReference type="PDB" id="7LS1">
    <property type="method" value="EM"/>
    <property type="resolution" value="3.30 A"/>
    <property type="chains" value="G1=1-217"/>
</dbReference>
<dbReference type="PDB" id="7LS2">
    <property type="method" value="EM"/>
    <property type="resolution" value="3.10 A"/>
    <property type="chains" value="G1=1-217"/>
</dbReference>
<dbReference type="PDBsum" id="6SWA"/>
<dbReference type="PDBsum" id="7CPU"/>
<dbReference type="PDBsum" id="7CPV"/>
<dbReference type="PDBsum" id="7LS1"/>
<dbReference type="PDBsum" id="7LS2"/>
<dbReference type="EMDB" id="EMD-10321"/>
<dbReference type="EMDB" id="EMD-23500"/>
<dbReference type="EMDB" id="EMD-23501"/>
<dbReference type="EMDB" id="EMD-30432"/>
<dbReference type="EMDB" id="EMD-30433"/>
<dbReference type="SMR" id="Q9CR57"/>
<dbReference type="BioGRID" id="211949">
    <property type="interactions" value="103"/>
</dbReference>
<dbReference type="ComplexPortal" id="CPX-5262">
    <property type="entry name" value="60S cytosolic large ribosomal subunit"/>
</dbReference>
<dbReference type="ComplexPortal" id="CPX-7662">
    <property type="entry name" value="60S cytosolic large ribosomal subunit, testis-specific variant"/>
</dbReference>
<dbReference type="ComplexPortal" id="CPX-7663">
    <property type="entry name" value="60S cytosolic large ribosomal subunit, striated muscle variant"/>
</dbReference>
<dbReference type="CORUM" id="Q9CR57"/>
<dbReference type="FunCoup" id="Q9CR57">
    <property type="interactions" value="1944"/>
</dbReference>
<dbReference type="IntAct" id="Q9CR57">
    <property type="interactions" value="6"/>
</dbReference>
<dbReference type="MINT" id="Q9CR57"/>
<dbReference type="STRING" id="10090.ENSMUSP00000131489"/>
<dbReference type="GlyGen" id="Q9CR57">
    <property type="glycosylation" value="1 site, 1 O-linked glycan (1 site)"/>
</dbReference>
<dbReference type="iPTMnet" id="Q9CR57"/>
<dbReference type="PhosphoSitePlus" id="Q9CR57"/>
<dbReference type="SwissPalm" id="Q9CR57"/>
<dbReference type="CPTAC" id="non-CPTAC-3667"/>
<dbReference type="jPOST" id="Q9CR57"/>
<dbReference type="PaxDb" id="10090-ENSMUSP00000131489"/>
<dbReference type="PeptideAtlas" id="Q9CR57"/>
<dbReference type="ProteomicsDB" id="255017"/>
<dbReference type="Pumba" id="Q9CR57"/>
<dbReference type="TopDownProteomics" id="Q9CR57"/>
<dbReference type="DNASU" id="67115"/>
<dbReference type="Ensembl" id="ENSMUST00000165532.3">
    <property type="protein sequence ID" value="ENSMUSP00000131489.2"/>
    <property type="gene ID" value="ENSMUSG00000025794.10"/>
</dbReference>
<dbReference type="GeneID" id="67115"/>
<dbReference type="KEGG" id="mmu:67115"/>
<dbReference type="UCSC" id="uc009scr.1">
    <property type="organism name" value="mouse"/>
</dbReference>
<dbReference type="AGR" id="MGI:1914365"/>
<dbReference type="CTD" id="9045"/>
<dbReference type="MGI" id="MGI:1914365">
    <property type="gene designation" value="Rpl14"/>
</dbReference>
<dbReference type="VEuPathDB" id="HostDB:ENSMUSG00000025794"/>
<dbReference type="eggNOG" id="KOG3421">
    <property type="taxonomic scope" value="Eukaryota"/>
</dbReference>
<dbReference type="GeneTree" id="ENSGT00390000007888"/>
<dbReference type="HOGENOM" id="CLU_082438_0_0_1"/>
<dbReference type="InParanoid" id="Q9CR57"/>
<dbReference type="OMA" id="HNYNESH"/>
<dbReference type="OrthoDB" id="1875589at2759"/>
<dbReference type="PhylomeDB" id="Q9CR57"/>
<dbReference type="TreeFam" id="TF314356"/>
<dbReference type="Reactome" id="R-MMU-156827">
    <property type="pathway name" value="L13a-mediated translational silencing of Ceruloplasmin expression"/>
</dbReference>
<dbReference type="Reactome" id="R-MMU-1799339">
    <property type="pathway name" value="SRP-dependent cotranslational protein targeting to membrane"/>
</dbReference>
<dbReference type="Reactome" id="R-MMU-6791226">
    <property type="pathway name" value="Major pathway of rRNA processing in the nucleolus and cytosol"/>
</dbReference>
<dbReference type="Reactome" id="R-MMU-72689">
    <property type="pathway name" value="Formation of a pool of free 40S subunits"/>
</dbReference>
<dbReference type="Reactome" id="R-MMU-72706">
    <property type="pathway name" value="GTP hydrolysis and joining of the 60S ribosomal subunit"/>
</dbReference>
<dbReference type="Reactome" id="R-MMU-975956">
    <property type="pathway name" value="Nonsense Mediated Decay (NMD) independent of the Exon Junction Complex (EJC)"/>
</dbReference>
<dbReference type="Reactome" id="R-MMU-975957">
    <property type="pathway name" value="Nonsense Mediated Decay (NMD) enhanced by the Exon Junction Complex (EJC)"/>
</dbReference>
<dbReference type="BioGRID-ORCS" id="67115">
    <property type="hits" value="30 hits in 74 CRISPR screens"/>
</dbReference>
<dbReference type="CD-CODE" id="CE726F99">
    <property type="entry name" value="Postsynaptic density"/>
</dbReference>
<dbReference type="ChiTaRS" id="Rpl14">
    <property type="organism name" value="mouse"/>
</dbReference>
<dbReference type="PRO" id="PR:Q9CR57"/>
<dbReference type="Proteomes" id="UP000000589">
    <property type="component" value="Chromosome 9"/>
</dbReference>
<dbReference type="RNAct" id="Q9CR57">
    <property type="molecule type" value="protein"/>
</dbReference>
<dbReference type="Bgee" id="ENSMUSG00000025794">
    <property type="expression patterns" value="Expressed in embryonic cell in blastocyst and 224 other cell types or tissues"/>
</dbReference>
<dbReference type="ExpressionAtlas" id="Q9CR57">
    <property type="expression patterns" value="baseline and differential"/>
</dbReference>
<dbReference type="GO" id="GO:0005737">
    <property type="term" value="C:cytoplasm"/>
    <property type="evidence" value="ECO:0000314"/>
    <property type="project" value="ComplexPortal"/>
</dbReference>
<dbReference type="GO" id="GO:0005829">
    <property type="term" value="C:cytosol"/>
    <property type="evidence" value="ECO:0000304"/>
    <property type="project" value="Reactome"/>
</dbReference>
<dbReference type="GO" id="GO:0022625">
    <property type="term" value="C:cytosolic large ribosomal subunit"/>
    <property type="evidence" value="ECO:0000314"/>
    <property type="project" value="UniProtKB"/>
</dbReference>
<dbReference type="GO" id="GO:0098794">
    <property type="term" value="C:postsynapse"/>
    <property type="evidence" value="ECO:0000303"/>
    <property type="project" value="SynGO"/>
</dbReference>
<dbReference type="GO" id="GO:0098793">
    <property type="term" value="C:presynapse"/>
    <property type="evidence" value="ECO:0000303"/>
    <property type="project" value="SynGO"/>
</dbReference>
<dbReference type="GO" id="GO:0005840">
    <property type="term" value="C:ribosome"/>
    <property type="evidence" value="ECO:0000303"/>
    <property type="project" value="SynGO"/>
</dbReference>
<dbReference type="GO" id="GO:0045202">
    <property type="term" value="C:synapse"/>
    <property type="evidence" value="ECO:0000314"/>
    <property type="project" value="SynGO"/>
</dbReference>
<dbReference type="GO" id="GO:0003723">
    <property type="term" value="F:RNA binding"/>
    <property type="evidence" value="ECO:0007669"/>
    <property type="project" value="InterPro"/>
</dbReference>
<dbReference type="GO" id="GO:0003735">
    <property type="term" value="F:structural constituent of ribosome"/>
    <property type="evidence" value="ECO:0000314"/>
    <property type="project" value="UniProtKB"/>
</dbReference>
<dbReference type="GO" id="GO:0002181">
    <property type="term" value="P:cytoplasmic translation"/>
    <property type="evidence" value="ECO:0000303"/>
    <property type="project" value="ComplexPortal"/>
</dbReference>
<dbReference type="GO" id="GO:0140242">
    <property type="term" value="P:translation at postsynapse"/>
    <property type="evidence" value="ECO:0000303"/>
    <property type="project" value="SynGO"/>
</dbReference>
<dbReference type="GO" id="GO:0140236">
    <property type="term" value="P:translation at presynapse"/>
    <property type="evidence" value="ECO:0000303"/>
    <property type="project" value="SynGO"/>
</dbReference>
<dbReference type="CDD" id="cd23702">
    <property type="entry name" value="eL14"/>
    <property type="match status" value="1"/>
</dbReference>
<dbReference type="FunFam" id="2.30.30.30:FF:000022">
    <property type="entry name" value="60S ribosomal protein L14"/>
    <property type="match status" value="1"/>
</dbReference>
<dbReference type="Gene3D" id="2.30.30.30">
    <property type="match status" value="1"/>
</dbReference>
<dbReference type="Gene3D" id="6.10.250.2270">
    <property type="match status" value="1"/>
</dbReference>
<dbReference type="InterPro" id="IPR014722">
    <property type="entry name" value="Rib_uL2_dom2"/>
</dbReference>
<dbReference type="InterPro" id="IPR039660">
    <property type="entry name" value="Ribosomal_eL14"/>
</dbReference>
<dbReference type="InterPro" id="IPR002784">
    <property type="entry name" value="Ribosomal_eL14_dom"/>
</dbReference>
<dbReference type="InterPro" id="IPR008991">
    <property type="entry name" value="Translation_prot_SH3-like_sf"/>
</dbReference>
<dbReference type="PANTHER" id="PTHR11127">
    <property type="entry name" value="60S RIBOSOMAL PROTEIN L14"/>
    <property type="match status" value="1"/>
</dbReference>
<dbReference type="PANTHER" id="PTHR11127:SF2">
    <property type="entry name" value="LARGE RIBOSOMAL SUBUNIT PROTEIN EL14"/>
    <property type="match status" value="1"/>
</dbReference>
<dbReference type="Pfam" id="PF01929">
    <property type="entry name" value="Ribosomal_L14e"/>
    <property type="match status" value="1"/>
</dbReference>
<dbReference type="SUPFAM" id="SSF50104">
    <property type="entry name" value="Translation proteins SH3-like domain"/>
    <property type="match status" value="1"/>
</dbReference>
<organism>
    <name type="scientific">Mus musculus</name>
    <name type="common">Mouse</name>
    <dbReference type="NCBI Taxonomy" id="10090"/>
    <lineage>
        <taxon>Eukaryota</taxon>
        <taxon>Metazoa</taxon>
        <taxon>Chordata</taxon>
        <taxon>Craniata</taxon>
        <taxon>Vertebrata</taxon>
        <taxon>Euteleostomi</taxon>
        <taxon>Mammalia</taxon>
        <taxon>Eutheria</taxon>
        <taxon>Euarchontoglires</taxon>
        <taxon>Glires</taxon>
        <taxon>Rodentia</taxon>
        <taxon>Myomorpha</taxon>
        <taxon>Muroidea</taxon>
        <taxon>Muridae</taxon>
        <taxon>Murinae</taxon>
        <taxon>Mus</taxon>
        <taxon>Mus</taxon>
    </lineage>
</organism>